<protein>
    <recommendedName>
        <fullName evidence="1">Glycine dehydrogenase (decarboxylating)</fullName>
        <ecNumber evidence="1">1.4.4.2</ecNumber>
    </recommendedName>
    <alternativeName>
        <fullName evidence="1">Glycine cleavage system P-protein</fullName>
    </alternativeName>
    <alternativeName>
        <fullName evidence="1">Glycine decarboxylase</fullName>
    </alternativeName>
    <alternativeName>
        <fullName evidence="1">Glycine dehydrogenase (aminomethyl-transferring)</fullName>
    </alternativeName>
</protein>
<comment type="function">
    <text evidence="1">The glycine cleavage system catalyzes the degradation of glycine. The P protein binds the alpha-amino group of glycine through its pyridoxal phosphate cofactor; CO(2) is released and the remaining methylamine moiety is then transferred to the lipoamide cofactor of the H protein.</text>
</comment>
<comment type="catalytic activity">
    <reaction evidence="1">
        <text>N(6)-[(R)-lipoyl]-L-lysyl-[glycine-cleavage complex H protein] + glycine + H(+) = N(6)-[(R)-S(8)-aminomethyldihydrolipoyl]-L-lysyl-[glycine-cleavage complex H protein] + CO2</text>
        <dbReference type="Rhea" id="RHEA:24304"/>
        <dbReference type="Rhea" id="RHEA-COMP:10494"/>
        <dbReference type="Rhea" id="RHEA-COMP:10495"/>
        <dbReference type="ChEBI" id="CHEBI:15378"/>
        <dbReference type="ChEBI" id="CHEBI:16526"/>
        <dbReference type="ChEBI" id="CHEBI:57305"/>
        <dbReference type="ChEBI" id="CHEBI:83099"/>
        <dbReference type="ChEBI" id="CHEBI:83143"/>
        <dbReference type="EC" id="1.4.4.2"/>
    </reaction>
</comment>
<comment type="cofactor">
    <cofactor evidence="1">
        <name>pyridoxal 5'-phosphate</name>
        <dbReference type="ChEBI" id="CHEBI:597326"/>
    </cofactor>
</comment>
<comment type="subunit">
    <text evidence="1">The glycine cleavage system is composed of four proteins: P, T, L and H.</text>
</comment>
<comment type="similarity">
    <text evidence="1">Belongs to the GcvP family.</text>
</comment>
<sequence>MPNLEPAVVVPTSEAIAVDLTKLEEKLAPADSFLDRHLGPGETEQRQMLQTLGFDTLGDLIDQAVPPAIRFPRSLQLPASQSEYGAIAQLKSIASKNQVFRSYIGMGYYDTITPPVIQRNILENPGWYTAYTPYQAEIAQGRLEALLNFQTMVMDLTGLEIANASLLDEGTAAAEAMALSYGVSKSKANAFFVAQDCHPQTIEVIKTRANPLGIEVIVGDHHTFSFSTSIFGALLQYPATDGAVYDYRSFIDKAHQHQALVTLAADPLSLTLLTPPGELGADIAVGSTQRFGIPLGYGGPHAAYFATKAEYQRKMPGRIVGVSKDAHGNPALRLALQTREQHIRRDKATSNICTAQVLLAVMASMYGVYHGSTGLKNIALRIHQLTVLLAIGLKRLNYSLNNDYFFDTLRVGVGEQSAPAILKAAEGRGINLRPLVPGEVGISLDETVTVQDLLDLWQVFAGKDNLPFTPEELWSEVKTSFPADLTRQSLYLQDAVFNQYHSETELLRYLHQLESKDLALNTSMIPLGSCTMKLNATAEMMPVTWPEFGKIHPFAPAGQTEGYQILFAQLEAWLGEITGFDAISLQPNAGSQGEYAGLQVIRQYHLSRGEEQRNICLIPESAHGTNPASAVMCGMQVVPVKCDGEGNIDVEDLTSKAEKYGDRLAALMVTYPSTHGVFEATIGTICDIVHRFGGEVYMDGANMNAQVGLCRPADFGADVCHLNLHKTFCIPHGGGGPGMGPIGVKSHLQAFLPRTSLNSTAELQAEDQSIGMISAAPYGSASILVISWMYIAMMGPQGLTKATEVAILSANYMAKRLENYYPILFRGNNELVAHECILDLRPLKKQAAIEVEDVAKRLMDFGFHAPTVSWPVLGTMMVEPTESESLGELDRFCDAMIAIYQEAQAITHGEIDPADNPLKNAPHTAQSLICGEWNHPYSQEEAAYPAPWTKQFKFWPAVGRINNTYGDRHLVCSCEGMEAYKEG</sequence>
<dbReference type="EC" id="1.4.4.2" evidence="1"/>
<dbReference type="EMBL" id="BA000022">
    <property type="protein sequence ID" value="BAA18516.1"/>
    <property type="molecule type" value="Genomic_DNA"/>
</dbReference>
<dbReference type="PIR" id="S76257">
    <property type="entry name" value="S76257"/>
</dbReference>
<dbReference type="PDB" id="4LGL">
    <property type="method" value="X-ray"/>
    <property type="resolution" value="2.00 A"/>
    <property type="chains" value="A/B=1-983"/>
</dbReference>
<dbReference type="PDB" id="4LHC">
    <property type="method" value="X-ray"/>
    <property type="resolution" value="1.90 A"/>
    <property type="chains" value="A/B=1-983"/>
</dbReference>
<dbReference type="PDB" id="4LHD">
    <property type="method" value="X-ray"/>
    <property type="resolution" value="1.80 A"/>
    <property type="chains" value="A/B=1-983"/>
</dbReference>
<dbReference type="PDBsum" id="4LGL"/>
<dbReference type="PDBsum" id="4LHC"/>
<dbReference type="PDBsum" id="4LHD"/>
<dbReference type="SMR" id="P74416"/>
<dbReference type="IntAct" id="P74416">
    <property type="interactions" value="2"/>
</dbReference>
<dbReference type="STRING" id="1148.gene:10499397"/>
<dbReference type="PaxDb" id="1148-1653603"/>
<dbReference type="EnsemblBacteria" id="BAA18516">
    <property type="protein sequence ID" value="BAA18516"/>
    <property type="gene ID" value="BAA18516"/>
</dbReference>
<dbReference type="KEGG" id="syn:slr0293"/>
<dbReference type="eggNOG" id="COG0403">
    <property type="taxonomic scope" value="Bacteria"/>
</dbReference>
<dbReference type="eggNOG" id="COG1003">
    <property type="taxonomic scope" value="Bacteria"/>
</dbReference>
<dbReference type="InParanoid" id="P74416"/>
<dbReference type="PhylomeDB" id="P74416"/>
<dbReference type="BioCyc" id="MetaCyc:MONOMER-22025"/>
<dbReference type="BRENDA" id="1.4.4.2">
    <property type="organism ID" value="382"/>
</dbReference>
<dbReference type="EvolutionaryTrace" id="P74416"/>
<dbReference type="Proteomes" id="UP000001425">
    <property type="component" value="Chromosome"/>
</dbReference>
<dbReference type="GO" id="GO:0005829">
    <property type="term" value="C:cytosol"/>
    <property type="evidence" value="ECO:0000318"/>
    <property type="project" value="GO_Central"/>
</dbReference>
<dbReference type="GO" id="GO:0005960">
    <property type="term" value="C:glycine cleavage complex"/>
    <property type="evidence" value="ECO:0000318"/>
    <property type="project" value="GO_Central"/>
</dbReference>
<dbReference type="GO" id="GO:0016594">
    <property type="term" value="F:glycine binding"/>
    <property type="evidence" value="ECO:0000318"/>
    <property type="project" value="GO_Central"/>
</dbReference>
<dbReference type="GO" id="GO:0004375">
    <property type="term" value="F:glycine dehydrogenase (decarboxylating) activity"/>
    <property type="evidence" value="ECO:0000318"/>
    <property type="project" value="GO_Central"/>
</dbReference>
<dbReference type="GO" id="GO:0030170">
    <property type="term" value="F:pyridoxal phosphate binding"/>
    <property type="evidence" value="ECO:0000318"/>
    <property type="project" value="GO_Central"/>
</dbReference>
<dbReference type="GO" id="GO:0019464">
    <property type="term" value="P:glycine decarboxylation via glycine cleavage system"/>
    <property type="evidence" value="ECO:0000318"/>
    <property type="project" value="GO_Central"/>
</dbReference>
<dbReference type="CDD" id="cd00613">
    <property type="entry name" value="GDC-P"/>
    <property type="match status" value="2"/>
</dbReference>
<dbReference type="FunFam" id="3.40.640.10:FF:000005">
    <property type="entry name" value="Glycine dehydrogenase (decarboxylating), mitochondrial"/>
    <property type="match status" value="1"/>
</dbReference>
<dbReference type="FunFam" id="3.90.1150.10:FF:000007">
    <property type="entry name" value="Glycine dehydrogenase (decarboxylating), mitochondrial"/>
    <property type="match status" value="1"/>
</dbReference>
<dbReference type="FunFam" id="3.40.640.10:FF:000007">
    <property type="entry name" value="glycine dehydrogenase (Decarboxylating), mitochondrial"/>
    <property type="match status" value="1"/>
</dbReference>
<dbReference type="Gene3D" id="3.90.1150.10">
    <property type="entry name" value="Aspartate Aminotransferase, domain 1"/>
    <property type="match status" value="1"/>
</dbReference>
<dbReference type="Gene3D" id="3.40.640.10">
    <property type="entry name" value="Type I PLP-dependent aspartate aminotransferase-like (Major domain)"/>
    <property type="match status" value="2"/>
</dbReference>
<dbReference type="HAMAP" id="MF_00711">
    <property type="entry name" value="GcvP"/>
    <property type="match status" value="1"/>
</dbReference>
<dbReference type="InterPro" id="IPR003437">
    <property type="entry name" value="GcvP"/>
</dbReference>
<dbReference type="InterPro" id="IPR049316">
    <property type="entry name" value="GDC-P_C"/>
</dbReference>
<dbReference type="InterPro" id="IPR049315">
    <property type="entry name" value="GDC-P_N"/>
</dbReference>
<dbReference type="InterPro" id="IPR020581">
    <property type="entry name" value="GDC_P"/>
</dbReference>
<dbReference type="InterPro" id="IPR015424">
    <property type="entry name" value="PyrdxlP-dep_Trfase"/>
</dbReference>
<dbReference type="InterPro" id="IPR015421">
    <property type="entry name" value="PyrdxlP-dep_Trfase_major"/>
</dbReference>
<dbReference type="InterPro" id="IPR015422">
    <property type="entry name" value="PyrdxlP-dep_Trfase_small"/>
</dbReference>
<dbReference type="NCBIfam" id="TIGR00461">
    <property type="entry name" value="gcvP"/>
    <property type="match status" value="1"/>
</dbReference>
<dbReference type="NCBIfam" id="NF003346">
    <property type="entry name" value="PRK04366.1"/>
    <property type="match status" value="1"/>
</dbReference>
<dbReference type="PANTHER" id="PTHR11773:SF1">
    <property type="entry name" value="GLYCINE DEHYDROGENASE (DECARBOXYLATING), MITOCHONDRIAL"/>
    <property type="match status" value="1"/>
</dbReference>
<dbReference type="PANTHER" id="PTHR11773">
    <property type="entry name" value="GLYCINE DEHYDROGENASE, DECARBOXYLATING"/>
    <property type="match status" value="1"/>
</dbReference>
<dbReference type="Pfam" id="PF21478">
    <property type="entry name" value="GcvP2_C"/>
    <property type="match status" value="1"/>
</dbReference>
<dbReference type="Pfam" id="PF02347">
    <property type="entry name" value="GDC-P"/>
    <property type="match status" value="1"/>
</dbReference>
<dbReference type="SUPFAM" id="SSF53383">
    <property type="entry name" value="PLP-dependent transferases"/>
    <property type="match status" value="2"/>
</dbReference>
<gene>
    <name evidence="1" type="primary">gcvP</name>
    <name type="ordered locus">slr0293</name>
</gene>
<keyword id="KW-0002">3D-structure</keyword>
<keyword id="KW-0560">Oxidoreductase</keyword>
<keyword id="KW-0663">Pyridoxal phosphate</keyword>
<keyword id="KW-1185">Reference proteome</keyword>
<feature type="chain" id="PRO_0000166942" description="Glycine dehydrogenase (decarboxylating)">
    <location>
        <begin position="1"/>
        <end position="983"/>
    </location>
</feature>
<feature type="modified residue" description="N6-(pyridoxal phosphate)lysine" evidence="1">
    <location>
        <position position="726"/>
    </location>
</feature>
<feature type="helix" evidence="4">
    <location>
        <begin position="16"/>
        <end position="26"/>
    </location>
</feature>
<feature type="helix" evidence="4">
    <location>
        <begin position="33"/>
        <end position="37"/>
    </location>
</feature>
<feature type="helix" evidence="4">
    <location>
        <begin position="42"/>
        <end position="52"/>
    </location>
</feature>
<feature type="helix" evidence="4">
    <location>
        <begin position="57"/>
        <end position="64"/>
    </location>
</feature>
<feature type="helix" evidence="4">
    <location>
        <begin position="67"/>
        <end position="69"/>
    </location>
</feature>
<feature type="helix" evidence="4">
    <location>
        <begin position="83"/>
        <end position="94"/>
    </location>
</feature>
<feature type="helix" evidence="4">
    <location>
        <begin position="115"/>
        <end position="120"/>
    </location>
</feature>
<feature type="turn" evidence="4">
    <location>
        <begin position="121"/>
        <end position="123"/>
    </location>
</feature>
<feature type="helix" evidence="4">
    <location>
        <begin position="125"/>
        <end position="128"/>
    </location>
</feature>
<feature type="helix" evidence="4">
    <location>
        <begin position="136"/>
        <end position="138"/>
    </location>
</feature>
<feature type="helix" evidence="4">
    <location>
        <begin position="140"/>
        <end position="157"/>
    </location>
</feature>
<feature type="strand" evidence="4">
    <location>
        <begin position="160"/>
        <end position="162"/>
    </location>
</feature>
<feature type="helix" evidence="4">
    <location>
        <begin position="169"/>
        <end position="182"/>
    </location>
</feature>
<feature type="strand" evidence="4">
    <location>
        <begin position="190"/>
        <end position="194"/>
    </location>
</feature>
<feature type="helix" evidence="4">
    <location>
        <begin position="199"/>
        <end position="209"/>
    </location>
</feature>
<feature type="helix" evidence="4">
    <location>
        <begin position="210"/>
        <end position="212"/>
    </location>
</feature>
<feature type="strand" evidence="4">
    <location>
        <begin position="215"/>
        <end position="219"/>
    </location>
</feature>
<feature type="helix" evidence="4">
    <location>
        <begin position="221"/>
        <end position="223"/>
    </location>
</feature>
<feature type="strand" evidence="4">
    <location>
        <begin position="230"/>
        <end position="238"/>
    </location>
</feature>
<feature type="helix" evidence="4">
    <location>
        <begin position="248"/>
        <end position="256"/>
    </location>
</feature>
<feature type="strand" evidence="4">
    <location>
        <begin position="260"/>
        <end position="265"/>
    </location>
</feature>
<feature type="helix" evidence="4">
    <location>
        <begin position="269"/>
        <end position="271"/>
    </location>
</feature>
<feature type="helix" evidence="4">
    <location>
        <begin position="276"/>
        <end position="279"/>
    </location>
</feature>
<feature type="strand" evidence="4">
    <location>
        <begin position="282"/>
        <end position="287"/>
    </location>
</feature>
<feature type="turn" evidence="4">
    <location>
        <begin position="289"/>
        <end position="292"/>
    </location>
</feature>
<feature type="helix" evidence="4">
    <location>
        <begin position="296"/>
        <end position="298"/>
    </location>
</feature>
<feature type="strand" evidence="4">
    <location>
        <begin position="303"/>
        <end position="307"/>
    </location>
</feature>
<feature type="helix" evidence="4">
    <location>
        <begin position="309"/>
        <end position="314"/>
    </location>
</feature>
<feature type="strand" evidence="4">
    <location>
        <begin position="319"/>
        <end position="325"/>
    </location>
</feature>
<feature type="strand" evidence="4">
    <location>
        <begin position="330"/>
        <end position="335"/>
    </location>
</feature>
<feature type="helix" evidence="4">
    <location>
        <begin position="337"/>
        <end position="339"/>
    </location>
</feature>
<feature type="helix" evidence="4">
    <location>
        <begin position="341"/>
        <end position="344"/>
    </location>
</feature>
<feature type="helix" evidence="4">
    <location>
        <begin position="345"/>
        <end position="347"/>
    </location>
</feature>
<feature type="helix" evidence="4">
    <location>
        <begin position="357"/>
        <end position="395"/>
    </location>
</feature>
<feature type="strand" evidence="4">
    <location>
        <begin position="403"/>
        <end position="412"/>
    </location>
</feature>
<feature type="turn" evidence="4">
    <location>
        <begin position="415"/>
        <end position="417"/>
    </location>
</feature>
<feature type="helix" evidence="4">
    <location>
        <begin position="418"/>
        <end position="427"/>
    </location>
</feature>
<feature type="strand" evidence="4">
    <location>
        <begin position="439"/>
        <end position="443"/>
    </location>
</feature>
<feature type="helix" evidence="4">
    <location>
        <begin position="450"/>
        <end position="461"/>
    </location>
</feature>
<feature type="strand" evidence="4">
    <location>
        <begin position="463"/>
        <end position="465"/>
    </location>
</feature>
<feature type="helix" evidence="4">
    <location>
        <begin position="471"/>
        <end position="476"/>
    </location>
</feature>
<feature type="helix" evidence="4">
    <location>
        <begin position="483"/>
        <end position="485"/>
    </location>
</feature>
<feature type="helix" evidence="4">
    <location>
        <begin position="495"/>
        <end position="497"/>
    </location>
</feature>
<feature type="helix" evidence="4">
    <location>
        <begin position="503"/>
        <end position="515"/>
    </location>
</feature>
<feature type="turn" evidence="4">
    <location>
        <begin position="520"/>
        <end position="522"/>
    </location>
</feature>
<feature type="turn" evidence="4">
    <location>
        <begin position="528"/>
        <end position="530"/>
    </location>
</feature>
<feature type="helix" evidence="4">
    <location>
        <begin position="537"/>
        <end position="540"/>
    </location>
</feature>
<feature type="helix" evidence="4">
    <location>
        <begin position="541"/>
        <end position="544"/>
    </location>
</feature>
<feature type="helix" evidence="4">
    <location>
        <begin position="546"/>
        <end position="549"/>
    </location>
</feature>
<feature type="helix" evidence="4">
    <location>
        <begin position="557"/>
        <end position="559"/>
    </location>
</feature>
<feature type="helix" evidence="4">
    <location>
        <begin position="561"/>
        <end position="578"/>
    </location>
</feature>
<feature type="strand" evidence="4">
    <location>
        <begin position="581"/>
        <end position="584"/>
    </location>
</feature>
<feature type="helix" evidence="4">
    <location>
        <begin position="590"/>
        <end position="607"/>
    </location>
</feature>
<feature type="strand" evidence="4">
    <location>
        <begin position="615"/>
        <end position="619"/>
    </location>
</feature>
<feature type="helix" evidence="4">
    <location>
        <begin position="625"/>
        <end position="632"/>
    </location>
</feature>
<feature type="strand" evidence="4">
    <location>
        <begin position="636"/>
        <end position="640"/>
    </location>
</feature>
<feature type="strand" evidence="4">
    <location>
        <begin position="646"/>
        <end position="648"/>
    </location>
</feature>
<feature type="helix" evidence="4">
    <location>
        <begin position="650"/>
        <end position="659"/>
    </location>
</feature>
<feature type="helix" evidence="4">
    <location>
        <begin position="661"/>
        <end position="663"/>
    </location>
</feature>
<feature type="strand" evidence="4">
    <location>
        <begin position="664"/>
        <end position="672"/>
    </location>
</feature>
<feature type="helix" evidence="4">
    <location>
        <begin position="682"/>
        <end position="691"/>
    </location>
</feature>
<feature type="strand" evidence="4">
    <location>
        <begin position="695"/>
        <end position="700"/>
    </location>
</feature>
<feature type="helix" evidence="4">
    <location>
        <begin position="703"/>
        <end position="705"/>
    </location>
</feature>
<feature type="turn" evidence="4">
    <location>
        <begin position="706"/>
        <end position="709"/>
    </location>
</feature>
<feature type="helix" evidence="4">
    <location>
        <begin position="712"/>
        <end position="714"/>
    </location>
</feature>
<feature type="strand" evidence="4">
    <location>
        <begin position="718"/>
        <end position="722"/>
    </location>
</feature>
<feature type="turn" evidence="2">
    <location>
        <begin position="724"/>
        <end position="728"/>
    </location>
</feature>
<feature type="turn" evidence="4">
    <location>
        <begin position="733"/>
        <end position="735"/>
    </location>
</feature>
<feature type="strand" evidence="4">
    <location>
        <begin position="742"/>
        <end position="744"/>
    </location>
</feature>
<feature type="helix" evidence="4">
    <location>
        <begin position="746"/>
        <end position="749"/>
    </location>
</feature>
<feature type="strand" evidence="4">
    <location>
        <begin position="773"/>
        <end position="776"/>
    </location>
</feature>
<feature type="helix" evidence="4">
    <location>
        <begin position="781"/>
        <end position="783"/>
    </location>
</feature>
<feature type="helix" evidence="4">
    <location>
        <begin position="784"/>
        <end position="817"/>
    </location>
</feature>
<feature type="turn" evidence="4">
    <location>
        <begin position="818"/>
        <end position="820"/>
    </location>
</feature>
<feature type="strand" evidence="2">
    <location>
        <begin position="823"/>
        <end position="825"/>
    </location>
</feature>
<feature type="helix" evidence="4">
    <location>
        <begin position="828"/>
        <end position="830"/>
    </location>
</feature>
<feature type="strand" evidence="4">
    <location>
        <begin position="836"/>
        <end position="839"/>
    </location>
</feature>
<feature type="helix" evidence="4">
    <location>
        <begin position="841"/>
        <end position="847"/>
    </location>
</feature>
<feature type="helix" evidence="4">
    <location>
        <begin position="851"/>
        <end position="860"/>
    </location>
</feature>
<feature type="strand" evidence="4">
    <location>
        <begin position="867"/>
        <end position="869"/>
    </location>
</feature>
<feature type="strand" evidence="4">
    <location>
        <begin position="875"/>
        <end position="878"/>
    </location>
</feature>
<feature type="helix" evidence="4">
    <location>
        <begin position="886"/>
        <end position="907"/>
    </location>
</feature>
<feature type="strand" evidence="4">
    <location>
        <begin position="913"/>
        <end position="916"/>
    </location>
</feature>
<feature type="helix" evidence="4">
    <location>
        <begin position="917"/>
        <end position="920"/>
    </location>
</feature>
<feature type="helix" evidence="4">
    <location>
        <begin position="925"/>
        <end position="929"/>
    </location>
</feature>
<feature type="strand" evidence="4">
    <location>
        <begin position="935"/>
        <end position="937"/>
    </location>
</feature>
<feature type="helix" evidence="4">
    <location>
        <begin position="939"/>
        <end position="943"/>
    </location>
</feature>
<feature type="helix" evidence="4">
    <location>
        <begin position="947"/>
        <end position="950"/>
    </location>
</feature>
<feature type="helix" evidence="4">
    <location>
        <begin position="963"/>
        <end position="968"/>
    </location>
</feature>
<feature type="strand" evidence="2">
    <location>
        <begin position="970"/>
        <end position="972"/>
    </location>
</feature>
<feature type="helix" evidence="3">
    <location>
        <begin position="974"/>
        <end position="976"/>
    </location>
</feature>
<proteinExistence type="evidence at protein level"/>
<reference key="1">
    <citation type="journal article" date="1996" name="DNA Res.">
        <title>Sequence analysis of the genome of the unicellular cyanobacterium Synechocystis sp. strain PCC6803. II. Sequence determination of the entire genome and assignment of potential protein-coding regions.</title>
        <authorList>
            <person name="Kaneko T."/>
            <person name="Sato S."/>
            <person name="Kotani H."/>
            <person name="Tanaka A."/>
            <person name="Asamizu E."/>
            <person name="Nakamura Y."/>
            <person name="Miyajima N."/>
            <person name="Hirosawa M."/>
            <person name="Sugiura M."/>
            <person name="Sasamoto S."/>
            <person name="Kimura T."/>
            <person name="Hosouchi T."/>
            <person name="Matsuno A."/>
            <person name="Muraki A."/>
            <person name="Nakazaki N."/>
            <person name="Naruo K."/>
            <person name="Okumura S."/>
            <person name="Shimpo S."/>
            <person name="Takeuchi C."/>
            <person name="Wada T."/>
            <person name="Watanabe A."/>
            <person name="Yamada M."/>
            <person name="Yasuda M."/>
            <person name="Tabata S."/>
        </authorList>
    </citation>
    <scope>NUCLEOTIDE SEQUENCE [LARGE SCALE GENOMIC DNA]</scope>
    <source>
        <strain>ATCC 27184 / PCC 6803 / Kazusa</strain>
    </source>
</reference>
<evidence type="ECO:0000255" key="1">
    <source>
        <dbReference type="HAMAP-Rule" id="MF_00711"/>
    </source>
</evidence>
<evidence type="ECO:0007829" key="2">
    <source>
        <dbReference type="PDB" id="4LGL"/>
    </source>
</evidence>
<evidence type="ECO:0007829" key="3">
    <source>
        <dbReference type="PDB" id="4LHC"/>
    </source>
</evidence>
<evidence type="ECO:0007829" key="4">
    <source>
        <dbReference type="PDB" id="4LHD"/>
    </source>
</evidence>
<organism>
    <name type="scientific">Synechocystis sp. (strain ATCC 27184 / PCC 6803 / Kazusa)</name>
    <dbReference type="NCBI Taxonomy" id="1111708"/>
    <lineage>
        <taxon>Bacteria</taxon>
        <taxon>Bacillati</taxon>
        <taxon>Cyanobacteriota</taxon>
        <taxon>Cyanophyceae</taxon>
        <taxon>Synechococcales</taxon>
        <taxon>Merismopediaceae</taxon>
        <taxon>Synechocystis</taxon>
    </lineage>
</organism>
<name>GCSP_SYNY3</name>
<accession>P74416</accession>